<accession>P40147</accession>
<accession>Q8JFA8</accession>
<name>OSTCN_XENLA</name>
<reference key="1">
    <citation type="journal article" date="2002" name="Gene">
        <title>Cloning and characterization of the cDNA and gene encoding Xenopus laevis osteocalcin.</title>
        <authorList>
            <person name="Viegas C.S.B."/>
            <person name="Pinto J.P."/>
            <person name="Conceicao N."/>
            <person name="Simes D.C."/>
            <person name="Cancela M.L."/>
        </authorList>
    </citation>
    <scope>NUCLEOTIDE SEQUENCE [GENOMIC DNA / MRNA]</scope>
    <source>
        <tissue>Bone</tissue>
    </source>
</reference>
<reference key="2">
    <citation type="journal article" date="1995" name="Int. J. Pept. Protein Res.">
        <title>Amino-acid sequence of bone Gla protein from the African clawed toad Xenopus laevis and the fish Sparus aurata.</title>
        <authorList>
            <person name="Cancela M.L."/>
            <person name="Williamson M.K."/>
            <person name="Price P.A."/>
        </authorList>
    </citation>
    <scope>PROTEIN SEQUENCE OF 53-101</scope>
    <scope>SUBCELLULAR LOCATION</scope>
    <scope>GAMMA-CARBOXYGLUTAMATION AT GLU-69; GLU-73 AND GLU-76</scope>
</reference>
<organism>
    <name type="scientific">Xenopus laevis</name>
    <name type="common">African clawed frog</name>
    <dbReference type="NCBI Taxonomy" id="8355"/>
    <lineage>
        <taxon>Eukaryota</taxon>
        <taxon>Metazoa</taxon>
        <taxon>Chordata</taxon>
        <taxon>Craniata</taxon>
        <taxon>Vertebrata</taxon>
        <taxon>Euteleostomi</taxon>
        <taxon>Amphibia</taxon>
        <taxon>Batrachia</taxon>
        <taxon>Anura</taxon>
        <taxon>Pipoidea</taxon>
        <taxon>Pipidae</taxon>
        <taxon>Xenopodinae</taxon>
        <taxon>Xenopus</taxon>
        <taxon>Xenopus</taxon>
    </lineage>
</organism>
<comment type="function">
    <text evidence="2">The carboxylated form is one of the main organic components of the bone matrix, which constitutes 1-2% of the total bone protein (By similarity). The carboxylated form binds strongly to apatite and calcium (By similarity).</text>
</comment>
<comment type="subcellular location">
    <subcellularLocation>
        <location evidence="5">Secreted</location>
    </subcellularLocation>
</comment>
<comment type="PTM">
    <text evidence="4 5">Gamma-carboxyglutamate residues are formed by vitamin K dependent carboxylation by GGCX. These residues are essential for the binding of calcium.</text>
</comment>
<comment type="similarity">
    <text evidence="6">Belongs to the osteocalcin/matrix Gla protein family.</text>
</comment>
<sequence>MKLAILTVLLLGAAVLCLGSKDADHSNSVGESHSSEAFISRQESASFARLKRSYGNNVGQGAAVGSPLESQREVCELNPDCDELADHIGFQEAYRRFYGPV</sequence>
<gene>
    <name type="primary">bglap</name>
</gene>
<proteinExistence type="evidence at protein level"/>
<evidence type="ECO:0000250" key="1">
    <source>
        <dbReference type="UniProtKB" id="P02820"/>
    </source>
</evidence>
<evidence type="ECO:0000250" key="2">
    <source>
        <dbReference type="UniProtKB" id="P86546"/>
    </source>
</evidence>
<evidence type="ECO:0000255" key="3"/>
<evidence type="ECO:0000255" key="4">
    <source>
        <dbReference type="PROSITE-ProRule" id="PRU00463"/>
    </source>
</evidence>
<evidence type="ECO:0000269" key="5">
    <source>
    </source>
</evidence>
<evidence type="ECO:0000305" key="6"/>
<feature type="signal peptide" evidence="3">
    <location>
        <begin position="1"/>
        <end position="19"/>
    </location>
</feature>
<feature type="propeptide" id="PRO_0000011100" evidence="5">
    <location>
        <begin position="20"/>
        <end position="52"/>
    </location>
</feature>
<feature type="chain" id="PRO_0000011101" description="Osteocalcin">
    <location>
        <begin position="53"/>
        <end position="101"/>
    </location>
</feature>
<feature type="domain" description="Gla" evidence="4">
    <location>
        <begin position="53"/>
        <end position="99"/>
    </location>
</feature>
<feature type="binding site" evidence="1">
    <location>
        <position position="69"/>
    </location>
    <ligand>
        <name>Ca(2+)</name>
        <dbReference type="ChEBI" id="CHEBI:29108"/>
        <label>1</label>
    </ligand>
</feature>
<feature type="binding site" evidence="1">
    <location>
        <position position="73"/>
    </location>
    <ligand>
        <name>Ca(2+)</name>
        <dbReference type="ChEBI" id="CHEBI:29108"/>
        <label>2</label>
    </ligand>
</feature>
<feature type="binding site" evidence="1">
    <location>
        <position position="76"/>
    </location>
    <ligand>
        <name>Ca(2+)</name>
        <dbReference type="ChEBI" id="CHEBI:29108"/>
        <label>2</label>
    </ligand>
</feature>
<feature type="binding site" evidence="1">
    <location>
        <position position="76"/>
    </location>
    <ligand>
        <name>Ca(2+)</name>
        <dbReference type="ChEBI" id="CHEBI:29108"/>
        <label>3</label>
    </ligand>
</feature>
<feature type="binding site" evidence="1">
    <location>
        <position position="82"/>
    </location>
    <ligand>
        <name>Ca(2+)</name>
        <dbReference type="ChEBI" id="CHEBI:29108"/>
        <label>3</label>
    </ligand>
</feature>
<feature type="modified residue" description="4-carboxyglutamate" evidence="4 5">
    <location>
        <position position="69"/>
    </location>
</feature>
<feature type="modified residue" description="4-carboxyglutamate" evidence="4 5">
    <location>
        <position position="73"/>
    </location>
</feature>
<feature type="modified residue" description="4-carboxyglutamate" evidence="4 5">
    <location>
        <position position="76"/>
    </location>
</feature>
<feature type="disulfide bond" evidence="4">
    <location>
        <begin position="75"/>
        <end position="81"/>
    </location>
</feature>
<keyword id="KW-0091">Biomineralization</keyword>
<keyword id="KW-0106">Calcium</keyword>
<keyword id="KW-0165">Cleavage on pair of basic residues</keyword>
<keyword id="KW-0903">Direct protein sequencing</keyword>
<keyword id="KW-1015">Disulfide bond</keyword>
<keyword id="KW-0301">Gamma-carboxyglutamic acid</keyword>
<keyword id="KW-0372">Hormone</keyword>
<keyword id="KW-0479">Metal-binding</keyword>
<keyword id="KW-1185">Reference proteome</keyword>
<keyword id="KW-0964">Secreted</keyword>
<keyword id="KW-0732">Signal</keyword>
<dbReference type="EMBL" id="AY043179">
    <property type="protein sequence ID" value="AAL07511.1"/>
    <property type="molecule type" value="Genomic_DNA"/>
</dbReference>
<dbReference type="EMBL" id="AF055576">
    <property type="protein sequence ID" value="AAM53434.1"/>
    <property type="molecule type" value="mRNA"/>
</dbReference>
<dbReference type="RefSeq" id="NP_001084212.1">
    <property type="nucleotide sequence ID" value="NM_001090743.1"/>
</dbReference>
<dbReference type="SMR" id="P40147"/>
<dbReference type="GeneID" id="399370"/>
<dbReference type="KEGG" id="xla:399370"/>
<dbReference type="AGR" id="Xenbase:XB-GENE-1018471"/>
<dbReference type="CTD" id="399370"/>
<dbReference type="Xenbase" id="XB-GENE-1018471">
    <property type="gene designation" value="bglap.S"/>
</dbReference>
<dbReference type="OrthoDB" id="9950568at2759"/>
<dbReference type="Proteomes" id="UP000186698">
    <property type="component" value="Chromosome 8S"/>
</dbReference>
<dbReference type="Bgee" id="399370">
    <property type="expression patterns" value="Expressed in internal ear and 3 other cell types or tissues"/>
</dbReference>
<dbReference type="GO" id="GO:0005576">
    <property type="term" value="C:extracellular region"/>
    <property type="evidence" value="ECO:0000318"/>
    <property type="project" value="GO_Central"/>
</dbReference>
<dbReference type="GO" id="GO:0005509">
    <property type="term" value="F:calcium ion binding"/>
    <property type="evidence" value="ECO:0007669"/>
    <property type="project" value="InterPro"/>
</dbReference>
<dbReference type="GO" id="GO:0005179">
    <property type="term" value="F:hormone activity"/>
    <property type="evidence" value="ECO:0000250"/>
    <property type="project" value="UniProtKB"/>
</dbReference>
<dbReference type="GO" id="GO:0046848">
    <property type="term" value="F:hydroxyapatite binding"/>
    <property type="evidence" value="ECO:0000318"/>
    <property type="project" value="GO_Central"/>
</dbReference>
<dbReference type="GO" id="GO:0008147">
    <property type="term" value="F:structural constituent of bone"/>
    <property type="evidence" value="ECO:0000250"/>
    <property type="project" value="UniProtKB"/>
</dbReference>
<dbReference type="GO" id="GO:0031214">
    <property type="term" value="P:biomineral tissue development"/>
    <property type="evidence" value="ECO:0007669"/>
    <property type="project" value="UniProtKB-KW"/>
</dbReference>
<dbReference type="GO" id="GO:0060348">
    <property type="term" value="P:bone development"/>
    <property type="evidence" value="ECO:0000318"/>
    <property type="project" value="GO_Central"/>
</dbReference>
<dbReference type="GO" id="GO:0032869">
    <property type="term" value="P:cellular response to insulin stimulus"/>
    <property type="evidence" value="ECO:0000250"/>
    <property type="project" value="UniProtKB"/>
</dbReference>
<dbReference type="GO" id="GO:0042593">
    <property type="term" value="P:glucose homeostasis"/>
    <property type="evidence" value="ECO:0000250"/>
    <property type="project" value="UniProtKB"/>
</dbReference>
<dbReference type="GO" id="GO:1903011">
    <property type="term" value="P:negative regulation of bone development"/>
    <property type="evidence" value="ECO:0000250"/>
    <property type="project" value="UniProtKB"/>
</dbReference>
<dbReference type="GO" id="GO:0001649">
    <property type="term" value="P:osteoblast differentiation"/>
    <property type="evidence" value="ECO:0000318"/>
    <property type="project" value="GO_Central"/>
</dbReference>
<dbReference type="GO" id="GO:0030500">
    <property type="term" value="P:regulation of bone mineralization"/>
    <property type="evidence" value="ECO:0007669"/>
    <property type="project" value="InterPro"/>
</dbReference>
<dbReference type="GO" id="GO:1900076">
    <property type="term" value="P:regulation of cellular response to insulin stimulus"/>
    <property type="evidence" value="ECO:0007669"/>
    <property type="project" value="InterPro"/>
</dbReference>
<dbReference type="GO" id="GO:0032571">
    <property type="term" value="P:response to vitamin K"/>
    <property type="evidence" value="ECO:0007669"/>
    <property type="project" value="InterPro"/>
</dbReference>
<dbReference type="GO" id="GO:0044342">
    <property type="term" value="P:type B pancreatic cell proliferation"/>
    <property type="evidence" value="ECO:0000250"/>
    <property type="project" value="UniProtKB"/>
</dbReference>
<dbReference type="InterPro" id="IPR035972">
    <property type="entry name" value="GLA-like_dom_SF"/>
</dbReference>
<dbReference type="InterPro" id="IPR000294">
    <property type="entry name" value="GLA_domain"/>
</dbReference>
<dbReference type="InterPro" id="IPR039176">
    <property type="entry name" value="Osteocalcin"/>
</dbReference>
<dbReference type="InterPro" id="IPR002384">
    <property type="entry name" value="Osteocalcin/MGP"/>
</dbReference>
<dbReference type="PANTHER" id="PTHR14235">
    <property type="entry name" value="OSTEOCALCIN"/>
    <property type="match status" value="1"/>
</dbReference>
<dbReference type="PANTHER" id="PTHR14235:SF0">
    <property type="entry name" value="OSTEOCALCIN"/>
    <property type="match status" value="1"/>
</dbReference>
<dbReference type="PRINTS" id="PR00002">
    <property type="entry name" value="GLABONE"/>
</dbReference>
<dbReference type="SMART" id="SM00069">
    <property type="entry name" value="GLA"/>
    <property type="match status" value="1"/>
</dbReference>
<dbReference type="SUPFAM" id="SSF57630">
    <property type="entry name" value="GLA-domain"/>
    <property type="match status" value="1"/>
</dbReference>
<dbReference type="PROSITE" id="PS00011">
    <property type="entry name" value="GLA_1"/>
    <property type="match status" value="1"/>
</dbReference>
<dbReference type="PROSITE" id="PS50998">
    <property type="entry name" value="GLA_2"/>
    <property type="match status" value="1"/>
</dbReference>
<protein>
    <recommendedName>
        <fullName>Osteocalcin</fullName>
    </recommendedName>
    <alternativeName>
        <fullName>Bone Gla protein</fullName>
        <shortName>BGP</shortName>
        <shortName>xBGP</shortName>
    </alternativeName>
    <alternativeName>
        <fullName>Gamma-carboxyglutamic acid-containing protein</fullName>
    </alternativeName>
</protein>